<accession>Q8CVH5</accession>
<dbReference type="EC" id="1.8.1.8" evidence="1"/>
<dbReference type="EMBL" id="AE014075">
    <property type="protein sequence ID" value="AAN83640.1"/>
    <property type="molecule type" value="Genomic_DNA"/>
</dbReference>
<dbReference type="RefSeq" id="WP_000068938.1">
    <property type="nucleotide sequence ID" value="NZ_CP051263.1"/>
</dbReference>
<dbReference type="SMR" id="Q8CVH5"/>
<dbReference type="STRING" id="199310.c5218"/>
<dbReference type="KEGG" id="ecc:c5218"/>
<dbReference type="eggNOG" id="COG4232">
    <property type="taxonomic scope" value="Bacteria"/>
</dbReference>
<dbReference type="HOGENOM" id="CLU_014657_3_0_6"/>
<dbReference type="BioCyc" id="ECOL199310:C5218-MONOMER"/>
<dbReference type="Proteomes" id="UP000001410">
    <property type="component" value="Chromosome"/>
</dbReference>
<dbReference type="GO" id="GO:0005886">
    <property type="term" value="C:plasma membrane"/>
    <property type="evidence" value="ECO:0007669"/>
    <property type="project" value="UniProtKB-SubCell"/>
</dbReference>
<dbReference type="GO" id="GO:0009055">
    <property type="term" value="F:electron transfer activity"/>
    <property type="evidence" value="ECO:0007669"/>
    <property type="project" value="UniProtKB-UniRule"/>
</dbReference>
<dbReference type="GO" id="GO:0047134">
    <property type="term" value="F:protein-disulfide reductase [NAD(P)H] activity"/>
    <property type="evidence" value="ECO:0007669"/>
    <property type="project" value="UniProtKB-UniRule"/>
</dbReference>
<dbReference type="GO" id="GO:0045454">
    <property type="term" value="P:cell redox homeostasis"/>
    <property type="evidence" value="ECO:0007669"/>
    <property type="project" value="TreeGrafter"/>
</dbReference>
<dbReference type="GO" id="GO:0017004">
    <property type="term" value="P:cytochrome complex assembly"/>
    <property type="evidence" value="ECO:0007669"/>
    <property type="project" value="UniProtKB-UniRule"/>
</dbReference>
<dbReference type="CDD" id="cd02953">
    <property type="entry name" value="DsbDgamma"/>
    <property type="match status" value="1"/>
</dbReference>
<dbReference type="FunFam" id="2.60.40.1250:FF:000001">
    <property type="entry name" value="Thiol:disulfide interchange protein DsbD"/>
    <property type="match status" value="1"/>
</dbReference>
<dbReference type="FunFam" id="3.40.30.10:FF:000116">
    <property type="entry name" value="Thiol:disulfide interchange protein DsbD"/>
    <property type="match status" value="1"/>
</dbReference>
<dbReference type="Gene3D" id="3.40.30.10">
    <property type="entry name" value="Glutaredoxin"/>
    <property type="match status" value="1"/>
</dbReference>
<dbReference type="Gene3D" id="2.60.40.1250">
    <property type="entry name" value="Thiol:disulfide interchange protein DsbD, N-terminal domain"/>
    <property type="match status" value="1"/>
</dbReference>
<dbReference type="HAMAP" id="MF_00399">
    <property type="entry name" value="DbsD"/>
    <property type="match status" value="1"/>
</dbReference>
<dbReference type="InterPro" id="IPR003834">
    <property type="entry name" value="Cyt_c_assmbl_TM_dom"/>
</dbReference>
<dbReference type="InterPro" id="IPR035671">
    <property type="entry name" value="DsbD_gamma"/>
</dbReference>
<dbReference type="InterPro" id="IPR028250">
    <property type="entry name" value="DsbDN"/>
</dbReference>
<dbReference type="InterPro" id="IPR036929">
    <property type="entry name" value="DsbDN_sf"/>
</dbReference>
<dbReference type="InterPro" id="IPR022910">
    <property type="entry name" value="Thiol_diS_interchange_DbsD"/>
</dbReference>
<dbReference type="InterPro" id="IPR012336">
    <property type="entry name" value="Thioredoxin-like_fold"/>
</dbReference>
<dbReference type="InterPro" id="IPR036249">
    <property type="entry name" value="Thioredoxin-like_sf"/>
</dbReference>
<dbReference type="InterPro" id="IPR017937">
    <property type="entry name" value="Thioredoxin_CS"/>
</dbReference>
<dbReference type="InterPro" id="IPR013766">
    <property type="entry name" value="Thioredoxin_domain"/>
</dbReference>
<dbReference type="NCBIfam" id="NF001419">
    <property type="entry name" value="PRK00293.1"/>
    <property type="match status" value="1"/>
</dbReference>
<dbReference type="PANTHER" id="PTHR32234">
    <property type="entry name" value="THIOL:DISULFIDE INTERCHANGE PROTEIN DSBD"/>
    <property type="match status" value="1"/>
</dbReference>
<dbReference type="PANTHER" id="PTHR32234:SF0">
    <property type="entry name" value="THIOL:DISULFIDE INTERCHANGE PROTEIN DSBD"/>
    <property type="match status" value="1"/>
</dbReference>
<dbReference type="Pfam" id="PF11412">
    <property type="entry name" value="DsbD_N"/>
    <property type="match status" value="1"/>
</dbReference>
<dbReference type="Pfam" id="PF02683">
    <property type="entry name" value="DsbD_TM"/>
    <property type="match status" value="1"/>
</dbReference>
<dbReference type="Pfam" id="PF13098">
    <property type="entry name" value="Thioredoxin_2"/>
    <property type="match status" value="1"/>
</dbReference>
<dbReference type="SUPFAM" id="SSF74863">
    <property type="entry name" value="Thiol:disulfide interchange protein DsbD, N-terminal domain (DsbD-alpha)"/>
    <property type="match status" value="1"/>
</dbReference>
<dbReference type="SUPFAM" id="SSF52833">
    <property type="entry name" value="Thioredoxin-like"/>
    <property type="match status" value="1"/>
</dbReference>
<dbReference type="PROSITE" id="PS00194">
    <property type="entry name" value="THIOREDOXIN_1"/>
    <property type="match status" value="1"/>
</dbReference>
<dbReference type="PROSITE" id="PS51352">
    <property type="entry name" value="THIOREDOXIN_2"/>
    <property type="match status" value="1"/>
</dbReference>
<comment type="function">
    <text evidence="1">Required to facilitate the formation of correct disulfide bonds in some periplasmic proteins and for the assembly of the periplasmic c-type cytochromes. Acts by transferring electrons from cytoplasmic thioredoxin to the periplasm. This transfer involves a cascade of disulfide bond formation and reduction steps.</text>
</comment>
<comment type="catalytic activity">
    <reaction evidence="1">
        <text>[protein]-dithiol + NAD(+) = [protein]-disulfide + NADH + H(+)</text>
        <dbReference type="Rhea" id="RHEA:18749"/>
        <dbReference type="Rhea" id="RHEA-COMP:10593"/>
        <dbReference type="Rhea" id="RHEA-COMP:10594"/>
        <dbReference type="ChEBI" id="CHEBI:15378"/>
        <dbReference type="ChEBI" id="CHEBI:29950"/>
        <dbReference type="ChEBI" id="CHEBI:50058"/>
        <dbReference type="ChEBI" id="CHEBI:57540"/>
        <dbReference type="ChEBI" id="CHEBI:57945"/>
        <dbReference type="EC" id="1.8.1.8"/>
    </reaction>
</comment>
<comment type="catalytic activity">
    <reaction evidence="1">
        <text>[protein]-dithiol + NADP(+) = [protein]-disulfide + NADPH + H(+)</text>
        <dbReference type="Rhea" id="RHEA:18753"/>
        <dbReference type="Rhea" id="RHEA-COMP:10593"/>
        <dbReference type="Rhea" id="RHEA-COMP:10594"/>
        <dbReference type="ChEBI" id="CHEBI:15378"/>
        <dbReference type="ChEBI" id="CHEBI:29950"/>
        <dbReference type="ChEBI" id="CHEBI:50058"/>
        <dbReference type="ChEBI" id="CHEBI:57783"/>
        <dbReference type="ChEBI" id="CHEBI:58349"/>
        <dbReference type="EC" id="1.8.1.8"/>
    </reaction>
</comment>
<comment type="subcellular location">
    <subcellularLocation>
        <location evidence="1">Cell inner membrane</location>
        <topology evidence="1">Multi-pass membrane protein</topology>
    </subcellularLocation>
</comment>
<comment type="similarity">
    <text evidence="1">Belongs to the thioredoxin family. DsbD subfamily.</text>
</comment>
<proteinExistence type="inferred from homology"/>
<reference key="1">
    <citation type="journal article" date="2002" name="Proc. Natl. Acad. Sci. U.S.A.">
        <title>Extensive mosaic structure revealed by the complete genome sequence of uropathogenic Escherichia coli.</title>
        <authorList>
            <person name="Welch R.A."/>
            <person name="Burland V."/>
            <person name="Plunkett G. III"/>
            <person name="Redford P."/>
            <person name="Roesch P."/>
            <person name="Rasko D."/>
            <person name="Buckles E.L."/>
            <person name="Liou S.-R."/>
            <person name="Boutin A."/>
            <person name="Hackett J."/>
            <person name="Stroud D."/>
            <person name="Mayhew G.F."/>
            <person name="Rose D.J."/>
            <person name="Zhou S."/>
            <person name="Schwartz D.C."/>
            <person name="Perna N.T."/>
            <person name="Mobley H.L.T."/>
            <person name="Donnenberg M.S."/>
            <person name="Blattner F.R."/>
        </authorList>
    </citation>
    <scope>NUCLEOTIDE SEQUENCE [LARGE SCALE GENOMIC DNA]</scope>
    <source>
        <strain>CFT073 / ATCC 700928 / UPEC</strain>
    </source>
</reference>
<feature type="signal peptide" evidence="1">
    <location>
        <begin position="1"/>
        <end position="19"/>
    </location>
</feature>
<feature type="chain" id="PRO_0000304387" description="Thiol:disulfide interchange protein DsbD">
    <location>
        <begin position="20"/>
        <end position="565"/>
    </location>
</feature>
<feature type="transmembrane region" description="Helical" evidence="1">
    <location>
        <begin position="163"/>
        <end position="183"/>
    </location>
</feature>
<feature type="transmembrane region" description="Helical" evidence="1">
    <location>
        <begin position="208"/>
        <end position="228"/>
    </location>
</feature>
<feature type="transmembrane region" description="Helical" evidence="1">
    <location>
        <begin position="243"/>
        <end position="263"/>
    </location>
</feature>
<feature type="transmembrane region" description="Helical" evidence="1">
    <location>
        <begin position="289"/>
        <end position="309"/>
    </location>
</feature>
<feature type="transmembrane region" description="Helical" evidence="1">
    <location>
        <begin position="323"/>
        <end position="343"/>
    </location>
</feature>
<feature type="transmembrane region" description="Helical" evidence="1">
    <location>
        <begin position="357"/>
        <end position="377"/>
    </location>
</feature>
<feature type="transmembrane region" description="Helical" evidence="1">
    <location>
        <begin position="384"/>
        <end position="404"/>
    </location>
</feature>
<feature type="domain" description="Thioredoxin" evidence="1">
    <location>
        <begin position="434"/>
        <end position="565"/>
    </location>
</feature>
<feature type="disulfide bond" description="Redox-active" evidence="1">
    <location>
        <begin position="122"/>
        <end position="128"/>
    </location>
</feature>
<feature type="disulfide bond" description="Redox-active" evidence="1">
    <location>
        <begin position="182"/>
        <end position="304"/>
    </location>
</feature>
<feature type="disulfide bond" description="Redox-active" evidence="1">
    <location>
        <begin position="480"/>
        <end position="483"/>
    </location>
</feature>
<keyword id="KW-0997">Cell inner membrane</keyword>
<keyword id="KW-1003">Cell membrane</keyword>
<keyword id="KW-0201">Cytochrome c-type biogenesis</keyword>
<keyword id="KW-1015">Disulfide bond</keyword>
<keyword id="KW-0249">Electron transport</keyword>
<keyword id="KW-0472">Membrane</keyword>
<keyword id="KW-0520">NAD</keyword>
<keyword id="KW-0560">Oxidoreductase</keyword>
<keyword id="KW-0676">Redox-active center</keyword>
<keyword id="KW-1185">Reference proteome</keyword>
<keyword id="KW-0732">Signal</keyword>
<keyword id="KW-0812">Transmembrane</keyword>
<keyword id="KW-1133">Transmembrane helix</keyword>
<keyword id="KW-0813">Transport</keyword>
<gene>
    <name evidence="1" type="primary">dsbD</name>
    <name type="ordered locus">c5218</name>
</gene>
<organism>
    <name type="scientific">Escherichia coli O6:H1 (strain CFT073 / ATCC 700928 / UPEC)</name>
    <dbReference type="NCBI Taxonomy" id="199310"/>
    <lineage>
        <taxon>Bacteria</taxon>
        <taxon>Pseudomonadati</taxon>
        <taxon>Pseudomonadota</taxon>
        <taxon>Gammaproteobacteria</taxon>
        <taxon>Enterobacterales</taxon>
        <taxon>Enterobacteriaceae</taxon>
        <taxon>Escherichia</taxon>
    </lineage>
</organism>
<evidence type="ECO:0000255" key="1">
    <source>
        <dbReference type="HAMAP-Rule" id="MF_00399"/>
    </source>
</evidence>
<protein>
    <recommendedName>
        <fullName evidence="1">Thiol:disulfide interchange protein DsbD</fullName>
        <ecNumber evidence="1">1.8.1.8</ecNumber>
    </recommendedName>
    <alternativeName>
        <fullName evidence="1">Protein-disulfide reductase</fullName>
        <shortName evidence="1">Disulfide reductase</shortName>
    </alternativeName>
</protein>
<name>DSBD_ECOL6</name>
<sequence length="565" mass="61889">MAQRIFTLILLLCSTSVFAGLFDAPGRSQFVPADQAFAFDFQQNQHDLNLTWQIKDGYYLYRKQIRITPEHAKIADVQLPQGVWHEDEFYGKSEIYRDRLTLPVTINQASAGATLTVTYQGCADAGFCYPPETKTVPLSEVVANNEASQPVSVPQQEQPTAQLPFSALWALLIGIGIAFTPCVLPMYPLISGIVLGGKQRLSTARALLLTFIYVQGMALTYTALGLVVAAAGLQFQAALQHPYVLIGLAIVFTLLAMSMFGLFTLQLPSSLQTRLTLMSNRQQGGSPGGVFIMGAIAGLICSPCTTAPLSAILLYIAQSGNMWLGGGTLYLYALGMGLPLMLITVFGNRLLPKSGPWMEQVKTAFGFVILALPVFLLERVIGDIWGLRLWSALGVAFFGWAFITSLQAKRGWMRVVQIILLAAALVSVRPLQDWAFGATHTAQTQTHLNFTQIKTVDELNQALVEAKGKPVMLDLYADWCVACKEFEKYTFSDPQVQKALADTVLLQANVTANDAQDMALLKHLNVLGLPTILFFDGQGQEHPQARVTGFMDAETFSAHLRDRQP</sequence>